<keyword id="KW-0687">Ribonucleoprotein</keyword>
<keyword id="KW-0689">Ribosomal protein</keyword>
<keyword id="KW-0694">RNA-binding</keyword>
<keyword id="KW-0699">rRNA-binding</keyword>
<accession>A4SCK1</accession>
<dbReference type="EMBL" id="CP000607">
    <property type="protein sequence ID" value="ABP36210.1"/>
    <property type="molecule type" value="Genomic_DNA"/>
</dbReference>
<dbReference type="SMR" id="A4SCK1"/>
<dbReference type="STRING" id="290318.Cvib_0187"/>
<dbReference type="KEGG" id="pvi:Cvib_0187"/>
<dbReference type="eggNOG" id="COG0292">
    <property type="taxonomic scope" value="Bacteria"/>
</dbReference>
<dbReference type="HOGENOM" id="CLU_123265_0_1_10"/>
<dbReference type="OrthoDB" id="9808966at2"/>
<dbReference type="GO" id="GO:1990904">
    <property type="term" value="C:ribonucleoprotein complex"/>
    <property type="evidence" value="ECO:0007669"/>
    <property type="project" value="UniProtKB-KW"/>
</dbReference>
<dbReference type="GO" id="GO:0005840">
    <property type="term" value="C:ribosome"/>
    <property type="evidence" value="ECO:0007669"/>
    <property type="project" value="UniProtKB-KW"/>
</dbReference>
<dbReference type="GO" id="GO:0019843">
    <property type="term" value="F:rRNA binding"/>
    <property type="evidence" value="ECO:0007669"/>
    <property type="project" value="UniProtKB-UniRule"/>
</dbReference>
<dbReference type="GO" id="GO:0003735">
    <property type="term" value="F:structural constituent of ribosome"/>
    <property type="evidence" value="ECO:0007669"/>
    <property type="project" value="InterPro"/>
</dbReference>
<dbReference type="GO" id="GO:0000027">
    <property type="term" value="P:ribosomal large subunit assembly"/>
    <property type="evidence" value="ECO:0007669"/>
    <property type="project" value="UniProtKB-UniRule"/>
</dbReference>
<dbReference type="GO" id="GO:0006412">
    <property type="term" value="P:translation"/>
    <property type="evidence" value="ECO:0007669"/>
    <property type="project" value="InterPro"/>
</dbReference>
<dbReference type="CDD" id="cd07026">
    <property type="entry name" value="Ribosomal_L20"/>
    <property type="match status" value="1"/>
</dbReference>
<dbReference type="FunFam" id="1.10.1900.20:FF:000001">
    <property type="entry name" value="50S ribosomal protein L20"/>
    <property type="match status" value="1"/>
</dbReference>
<dbReference type="Gene3D" id="6.10.160.10">
    <property type="match status" value="1"/>
</dbReference>
<dbReference type="Gene3D" id="1.10.1900.20">
    <property type="entry name" value="Ribosomal protein L20"/>
    <property type="match status" value="1"/>
</dbReference>
<dbReference type="HAMAP" id="MF_00382">
    <property type="entry name" value="Ribosomal_bL20"/>
    <property type="match status" value="1"/>
</dbReference>
<dbReference type="InterPro" id="IPR005813">
    <property type="entry name" value="Ribosomal_bL20"/>
</dbReference>
<dbReference type="InterPro" id="IPR049946">
    <property type="entry name" value="RIBOSOMAL_L20_CS"/>
</dbReference>
<dbReference type="InterPro" id="IPR035566">
    <property type="entry name" value="Ribosomal_protein_bL20_C"/>
</dbReference>
<dbReference type="NCBIfam" id="TIGR01032">
    <property type="entry name" value="rplT_bact"/>
    <property type="match status" value="1"/>
</dbReference>
<dbReference type="PANTHER" id="PTHR10986">
    <property type="entry name" value="39S RIBOSOMAL PROTEIN L20"/>
    <property type="match status" value="1"/>
</dbReference>
<dbReference type="Pfam" id="PF00453">
    <property type="entry name" value="Ribosomal_L20"/>
    <property type="match status" value="1"/>
</dbReference>
<dbReference type="PRINTS" id="PR00062">
    <property type="entry name" value="RIBOSOMALL20"/>
</dbReference>
<dbReference type="SUPFAM" id="SSF74731">
    <property type="entry name" value="Ribosomal protein L20"/>
    <property type="match status" value="1"/>
</dbReference>
<dbReference type="PROSITE" id="PS00937">
    <property type="entry name" value="RIBOSOMAL_L20"/>
    <property type="match status" value="1"/>
</dbReference>
<sequence length="115" mass="13033">MPKANNAVAAKARRKRVLKKAKGYWGSRGNVLTVVKHAVDKAEQYAYRDRRAKKRTFRALWIMRINAAARLNGTTYSRLVDAMNKKSVEIDRKAMAEIAVKDPEAFTTLVKAIID</sequence>
<feature type="chain" id="PRO_1000080085" description="Large ribosomal subunit protein bL20">
    <location>
        <begin position="1"/>
        <end position="115"/>
    </location>
</feature>
<gene>
    <name evidence="1" type="primary">rplT</name>
    <name type="ordered locus">Cvib_0187</name>
</gene>
<reference key="1">
    <citation type="submission" date="2007-03" db="EMBL/GenBank/DDBJ databases">
        <title>Complete sequence of Prosthecochloris vibrioformis DSM 265.</title>
        <authorList>
            <consortium name="US DOE Joint Genome Institute"/>
            <person name="Copeland A."/>
            <person name="Lucas S."/>
            <person name="Lapidus A."/>
            <person name="Barry K."/>
            <person name="Detter J.C."/>
            <person name="Glavina del Rio T."/>
            <person name="Hammon N."/>
            <person name="Israni S."/>
            <person name="Pitluck S."/>
            <person name="Schmutz J."/>
            <person name="Larimer F."/>
            <person name="Land M."/>
            <person name="Hauser L."/>
            <person name="Mikhailova N."/>
            <person name="Li T."/>
            <person name="Overmann J."/>
            <person name="Schuster S.C."/>
            <person name="Bryant D.A."/>
            <person name="Richardson P."/>
        </authorList>
    </citation>
    <scope>NUCLEOTIDE SEQUENCE [LARGE SCALE GENOMIC DNA]</scope>
    <source>
        <strain>DSM 265 / 1930</strain>
    </source>
</reference>
<protein>
    <recommendedName>
        <fullName evidence="1">Large ribosomal subunit protein bL20</fullName>
    </recommendedName>
    <alternativeName>
        <fullName evidence="2">50S ribosomal protein L20</fullName>
    </alternativeName>
</protein>
<name>RL20_CHLPM</name>
<proteinExistence type="inferred from homology"/>
<organism>
    <name type="scientific">Chlorobium phaeovibrioides (strain DSM 265 / 1930)</name>
    <name type="common">Prosthecochloris vibrioformis (strain DSM 265)</name>
    <dbReference type="NCBI Taxonomy" id="290318"/>
    <lineage>
        <taxon>Bacteria</taxon>
        <taxon>Pseudomonadati</taxon>
        <taxon>Chlorobiota</taxon>
        <taxon>Chlorobiia</taxon>
        <taxon>Chlorobiales</taxon>
        <taxon>Chlorobiaceae</taxon>
        <taxon>Chlorobium/Pelodictyon group</taxon>
        <taxon>Chlorobium</taxon>
    </lineage>
</organism>
<comment type="function">
    <text evidence="1">Binds directly to 23S ribosomal RNA and is necessary for the in vitro assembly process of the 50S ribosomal subunit. It is not involved in the protein synthesizing functions of that subunit.</text>
</comment>
<comment type="similarity">
    <text evidence="1">Belongs to the bacterial ribosomal protein bL20 family.</text>
</comment>
<evidence type="ECO:0000255" key="1">
    <source>
        <dbReference type="HAMAP-Rule" id="MF_00382"/>
    </source>
</evidence>
<evidence type="ECO:0000305" key="2"/>